<evidence type="ECO:0000255" key="1">
    <source>
        <dbReference type="PROSITE-ProRule" id="PRU00192"/>
    </source>
</evidence>
<evidence type="ECO:0000305" key="2">
    <source>
    </source>
</evidence>
<evidence type="ECO:0000305" key="3">
    <source>
    </source>
</evidence>
<evidence type="ECO:0000305" key="4">
    <source>
    </source>
</evidence>
<comment type="caution">
    <text evidence="2 3 4">Could be the product of a pseudogene unlikely to encode a functional protein. This is a truncated version of guanine nucleotide exchange factor SDC25. Strain S288c has a frameshift in position 92, which disrupts the gene coding for this protein and produces two ORFs YLL016W and YLL017W. Because of that it is not part of the S.cerevisiae S288c complete/reference proteome set. A contiguous sequence for SDC25 can be found in strain W303 (AC P0CF32).</text>
</comment>
<keyword id="KW-0131">Cell cycle</keyword>
<keyword id="KW-0132">Cell division</keyword>
<keyword id="KW-0728">SH3 domain</keyword>
<accession>P0CF33</accession>
<accession>P14771</accession>
<accession>Q12037</accession>
<accession>Q12065</accession>
<accession>Q6B0T5</accession>
<accession>Q6WV04</accession>
<dbReference type="EMBL" id="X91488">
    <property type="protein sequence ID" value="CAA62774.1"/>
    <property type="molecule type" value="Genomic_DNA"/>
</dbReference>
<dbReference type="EMBL" id="X97560">
    <property type="protein sequence ID" value="CAA66173.1"/>
    <property type="molecule type" value="Genomic_DNA"/>
</dbReference>
<dbReference type="EMBL" id="Z73122">
    <property type="protein sequence ID" value="CAA97462.1"/>
    <property type="molecule type" value="Genomic_DNA"/>
</dbReference>
<dbReference type="EMBL" id="AY693345">
    <property type="protein sequence ID" value="AAT93364.1"/>
    <property type="molecule type" value="Genomic_DNA"/>
</dbReference>
<dbReference type="EMBL" id="AY268135">
    <property type="protein sequence ID" value="AAR26281.1"/>
    <property type="molecule type" value="Genomic_DNA"/>
</dbReference>
<dbReference type="PIR" id="S64759">
    <property type="entry name" value="S64759"/>
</dbReference>
<dbReference type="SMR" id="P0CF33"/>
<dbReference type="AGR" id="SGD:S000003940"/>
<dbReference type="SGD" id="S000003940">
    <property type="gene designation" value="YLL017W"/>
</dbReference>
<dbReference type="GO" id="GO:0051301">
    <property type="term" value="P:cell division"/>
    <property type="evidence" value="ECO:0007669"/>
    <property type="project" value="UniProtKB-KW"/>
</dbReference>
<dbReference type="CDD" id="cd11883">
    <property type="entry name" value="SH3_Sdc25"/>
    <property type="match status" value="1"/>
</dbReference>
<dbReference type="Gene3D" id="2.30.30.40">
    <property type="entry name" value="SH3 Domains"/>
    <property type="match status" value="1"/>
</dbReference>
<dbReference type="InterPro" id="IPR036028">
    <property type="entry name" value="SH3-like_dom_sf"/>
</dbReference>
<dbReference type="InterPro" id="IPR001452">
    <property type="entry name" value="SH3_domain"/>
</dbReference>
<dbReference type="Pfam" id="PF00018">
    <property type="entry name" value="SH3_1"/>
    <property type="match status" value="1"/>
</dbReference>
<dbReference type="SMART" id="SM00326">
    <property type="entry name" value="SH3"/>
    <property type="match status" value="1"/>
</dbReference>
<dbReference type="SUPFAM" id="SSF50044">
    <property type="entry name" value="SH3-domain"/>
    <property type="match status" value="1"/>
</dbReference>
<dbReference type="PROSITE" id="PS50002">
    <property type="entry name" value="SH3"/>
    <property type="match status" value="1"/>
</dbReference>
<name>YL017_YEAST</name>
<feature type="chain" id="PRO_0000393435" description="Putative truncated guanine nucleotide exchange factor YLL017W">
    <location>
        <begin position="1"/>
        <end position="103"/>
    </location>
</feature>
<feature type="domain" description="SH3" evidence="1">
    <location>
        <begin position="26"/>
        <end position="97"/>
    </location>
</feature>
<sequence length="103" mass="11554">MSCTASYAGMTTPVKDKEGHGIPCLQPIDVVECTYQYFTKSRNKLSLRVGDLIYVLTKGSNGWWDGVLIRHSANNNNNSLILDRGWFPPSFYTVHSKRTTRGA</sequence>
<gene>
    <name type="ordered locus">YLL017W</name>
    <name type="ORF">L1305</name>
</gene>
<organism>
    <name type="scientific">Saccharomyces cerevisiae (strain ATCC 204508 / S288c)</name>
    <name type="common">Baker's yeast</name>
    <dbReference type="NCBI Taxonomy" id="559292"/>
    <lineage>
        <taxon>Eukaryota</taxon>
        <taxon>Fungi</taxon>
        <taxon>Dikarya</taxon>
        <taxon>Ascomycota</taxon>
        <taxon>Saccharomycotina</taxon>
        <taxon>Saccharomycetes</taxon>
        <taxon>Saccharomycetales</taxon>
        <taxon>Saccharomycetaceae</taxon>
        <taxon>Saccharomyces</taxon>
    </lineage>
</organism>
<reference key="1">
    <citation type="journal article" date="1996" name="Yeast">
        <title>Sequence analysis of the CEN12 region of Saccharomyces cerevisiae on a 43.7 kb fragment of chromosome XII including an open reading frame homologous to the human cystic fibrosis transmembrane conductance regulator protein CFTR.</title>
        <authorList>
            <person name="Miosga T."/>
            <person name="Zimmermann F.K."/>
        </authorList>
    </citation>
    <scope>NUCLEOTIDE SEQUENCE [LARGE SCALE GENOMIC DNA]</scope>
    <scope>IDENTIFICATION OF FRAMESHIFT</scope>
    <source>
        <strain>ATCC 90840 / EAY235 / FY23</strain>
    </source>
</reference>
<reference key="2">
    <citation type="journal article" date="1997" name="Yeast">
        <title>The sequence of 32kb on the left arm of yeast chromosome XII reveals six known genes, a new member of the seripauperins family and a new ABC transporter homologous to the human multidrug resistance protein.</title>
        <authorList>
            <person name="Purnelle B."/>
            <person name="Goffeau A."/>
        </authorList>
    </citation>
    <scope>NUCLEOTIDE SEQUENCE [LARGE SCALE GENOMIC DNA]</scope>
    <source>
        <strain>ATCC 204508 / S288c</strain>
    </source>
</reference>
<reference key="3">
    <citation type="journal article" date="1997" name="Nature">
        <title>The nucleotide sequence of Saccharomyces cerevisiae chromosome XII.</title>
        <authorList>
            <person name="Johnston M."/>
            <person name="Hillier L.W."/>
            <person name="Riles L."/>
            <person name="Albermann K."/>
            <person name="Andre B."/>
            <person name="Ansorge W."/>
            <person name="Benes V."/>
            <person name="Brueckner M."/>
            <person name="Delius H."/>
            <person name="Dubois E."/>
            <person name="Duesterhoeft A."/>
            <person name="Entian K.-D."/>
            <person name="Floeth M."/>
            <person name="Goffeau A."/>
            <person name="Hebling U."/>
            <person name="Heumann K."/>
            <person name="Heuss-Neitzel D."/>
            <person name="Hilbert H."/>
            <person name="Hilger F."/>
            <person name="Kleine K."/>
            <person name="Koetter P."/>
            <person name="Louis E.J."/>
            <person name="Messenguy F."/>
            <person name="Mewes H.-W."/>
            <person name="Miosga T."/>
            <person name="Moestl D."/>
            <person name="Mueller-Auer S."/>
            <person name="Nentwich U."/>
            <person name="Obermaier B."/>
            <person name="Piravandi E."/>
            <person name="Pohl T.M."/>
            <person name="Portetelle D."/>
            <person name="Purnelle B."/>
            <person name="Rechmann S."/>
            <person name="Rieger M."/>
            <person name="Rinke M."/>
            <person name="Rose M."/>
            <person name="Scharfe M."/>
            <person name="Scherens B."/>
            <person name="Scholler P."/>
            <person name="Schwager C."/>
            <person name="Schwarz S."/>
            <person name="Underwood A.P."/>
            <person name="Urrestarazu L.A."/>
            <person name="Vandenbol M."/>
            <person name="Verhasselt P."/>
            <person name="Vierendeels F."/>
            <person name="Voet M."/>
            <person name="Volckaert G."/>
            <person name="Voss H."/>
            <person name="Wambutt R."/>
            <person name="Wedler E."/>
            <person name="Wedler H."/>
            <person name="Zimmermann F.K."/>
            <person name="Zollner A."/>
            <person name="Hani J."/>
            <person name="Hoheisel J.D."/>
        </authorList>
    </citation>
    <scope>NUCLEOTIDE SEQUENCE [LARGE SCALE GENOMIC DNA]</scope>
    <source>
        <strain>ATCC 204508 / S288c</strain>
    </source>
</reference>
<reference key="4">
    <citation type="journal article" date="2014" name="G3 (Bethesda)">
        <title>The reference genome sequence of Saccharomyces cerevisiae: Then and now.</title>
        <authorList>
            <person name="Engel S.R."/>
            <person name="Dietrich F.S."/>
            <person name="Fisk D.G."/>
            <person name="Binkley G."/>
            <person name="Balakrishnan R."/>
            <person name="Costanzo M.C."/>
            <person name="Dwight S.S."/>
            <person name="Hitz B.C."/>
            <person name="Karra K."/>
            <person name="Nash R.S."/>
            <person name="Weng S."/>
            <person name="Wong E.D."/>
            <person name="Lloyd P."/>
            <person name="Skrzypek M.S."/>
            <person name="Miyasato S.R."/>
            <person name="Simison M."/>
            <person name="Cherry J.M."/>
        </authorList>
    </citation>
    <scope>GENOME REANNOTATION</scope>
    <source>
        <strain>ATCC 204508 / S288c</strain>
    </source>
</reference>
<reference key="5">
    <citation type="journal article" date="2007" name="Genome Res.">
        <title>Approaching a complete repository of sequence-verified protein-encoding clones for Saccharomyces cerevisiae.</title>
        <authorList>
            <person name="Hu Y."/>
            <person name="Rolfs A."/>
            <person name="Bhullar B."/>
            <person name="Murthy T.V.S."/>
            <person name="Zhu C."/>
            <person name="Berger M.F."/>
            <person name="Camargo A.A."/>
            <person name="Kelley F."/>
            <person name="McCarron S."/>
            <person name="Jepson D."/>
            <person name="Richardson A."/>
            <person name="Raphael J."/>
            <person name="Moreira D."/>
            <person name="Taycher E."/>
            <person name="Zuo D."/>
            <person name="Mohr S."/>
            <person name="Kane M.F."/>
            <person name="Williamson J."/>
            <person name="Simpson A.J.G."/>
            <person name="Bulyk M.L."/>
            <person name="Harlow E."/>
            <person name="Marsischky G."/>
            <person name="Kolodner R.D."/>
            <person name="LaBaer J."/>
        </authorList>
    </citation>
    <scope>NUCLEOTIDE SEQUENCE [GENOMIC DNA]</scope>
    <source>
        <strain>ATCC 204508 / S288c</strain>
    </source>
</reference>
<reference key="6">
    <citation type="journal article" date="2003" name="Genome Biol.">
        <title>Reinvestigation of the Saccharomyces cerevisiae genome annotation by comparison to the genome of a related fungus: Ashbya gossypii.</title>
        <authorList>
            <person name="Brachat S."/>
            <person name="Dietrich F.S."/>
            <person name="Voegeli S."/>
            <person name="Zhang Z."/>
            <person name="Stuart L."/>
            <person name="Lerch A."/>
            <person name="Gates K."/>
            <person name="Gaffney T.D."/>
            <person name="Philippsen P."/>
        </authorList>
    </citation>
    <scope>NUCLEOTIDE SEQUENCE [GENOMIC DNA] OF 56-103</scope>
    <scope>IDENTIFICATION OF FRAMESHIFT</scope>
    <source>
        <strain>ATCC 204511 / S288c / AB972</strain>
    </source>
</reference>
<protein>
    <recommendedName>
        <fullName>Putative truncated guanine nucleotide exchange factor YLL017W</fullName>
    </recommendedName>
</protein>
<proteinExistence type="uncertain"/>